<accession>B7N3C7</accession>
<organism>
    <name type="scientific">Escherichia coli O17:K52:H18 (strain UMN026 / ExPEC)</name>
    <dbReference type="NCBI Taxonomy" id="585056"/>
    <lineage>
        <taxon>Bacteria</taxon>
        <taxon>Pseudomonadati</taxon>
        <taxon>Pseudomonadota</taxon>
        <taxon>Gammaproteobacteria</taxon>
        <taxon>Enterobacterales</taxon>
        <taxon>Enterobacteriaceae</taxon>
        <taxon>Escherichia</taxon>
    </lineage>
</organism>
<evidence type="ECO:0000255" key="1">
    <source>
        <dbReference type="HAMAP-Rule" id="MF_00789"/>
    </source>
</evidence>
<feature type="signal peptide" evidence="1">
    <location>
        <begin position="1"/>
        <end position="20"/>
    </location>
</feature>
<feature type="chain" id="PRO_1000200487" description="UPF0319 protein YccT">
    <location>
        <begin position="21"/>
        <end position="220"/>
    </location>
</feature>
<protein>
    <recommendedName>
        <fullName evidence="1">UPF0319 protein YccT</fullName>
    </recommendedName>
</protein>
<reference key="1">
    <citation type="journal article" date="2009" name="PLoS Genet.">
        <title>Organised genome dynamics in the Escherichia coli species results in highly diverse adaptive paths.</title>
        <authorList>
            <person name="Touchon M."/>
            <person name="Hoede C."/>
            <person name="Tenaillon O."/>
            <person name="Barbe V."/>
            <person name="Baeriswyl S."/>
            <person name="Bidet P."/>
            <person name="Bingen E."/>
            <person name="Bonacorsi S."/>
            <person name="Bouchier C."/>
            <person name="Bouvet O."/>
            <person name="Calteau A."/>
            <person name="Chiapello H."/>
            <person name="Clermont O."/>
            <person name="Cruveiller S."/>
            <person name="Danchin A."/>
            <person name="Diard M."/>
            <person name="Dossat C."/>
            <person name="Karoui M.E."/>
            <person name="Frapy E."/>
            <person name="Garry L."/>
            <person name="Ghigo J.M."/>
            <person name="Gilles A.M."/>
            <person name="Johnson J."/>
            <person name="Le Bouguenec C."/>
            <person name="Lescat M."/>
            <person name="Mangenot S."/>
            <person name="Martinez-Jehanne V."/>
            <person name="Matic I."/>
            <person name="Nassif X."/>
            <person name="Oztas S."/>
            <person name="Petit M.A."/>
            <person name="Pichon C."/>
            <person name="Rouy Z."/>
            <person name="Ruf C.S."/>
            <person name="Schneider D."/>
            <person name="Tourret J."/>
            <person name="Vacherie B."/>
            <person name="Vallenet D."/>
            <person name="Medigue C."/>
            <person name="Rocha E.P.C."/>
            <person name="Denamur E."/>
        </authorList>
    </citation>
    <scope>NUCLEOTIDE SEQUENCE [LARGE SCALE GENOMIC DNA]</scope>
    <source>
        <strain>UMN026 / ExPEC</strain>
    </source>
</reference>
<name>YCCT_ECOLU</name>
<gene>
    <name evidence="1" type="primary">yccT</name>
    <name type="ordered locus">ECUMN_1154</name>
</gene>
<sequence length="220" mass="24594">MKTGIVTTLIALCLPVSVFATTLRLSTDVDLLVLDGKKVSSSLLRGADSIELDNGPHQLVFRVEKTIHLSNSEERLYISPPLVVSFNTQLINQVNFRLPRLENEREANHFDAAPRLELLDGDATPIPVKLDILAITSTAKTIDYEVEVERYNKSAKRASLPQFATMMADDSTLLSGVSELDAIPPQSQVLTEQRLKYWFKLADPQTRNTFLQWAEKQPSS</sequence>
<dbReference type="EMBL" id="CU928163">
    <property type="protein sequence ID" value="CAR12363.1"/>
    <property type="molecule type" value="Genomic_DNA"/>
</dbReference>
<dbReference type="RefSeq" id="WP_000847791.1">
    <property type="nucleotide sequence ID" value="NC_011751.1"/>
</dbReference>
<dbReference type="RefSeq" id="YP_002411907.1">
    <property type="nucleotide sequence ID" value="NC_011751.1"/>
</dbReference>
<dbReference type="STRING" id="585056.ECUMN_1154"/>
<dbReference type="KEGG" id="eum:ECUMN_1154"/>
<dbReference type="PATRIC" id="fig|585056.7.peg.1350"/>
<dbReference type="HOGENOM" id="CLU_073782_2_0_6"/>
<dbReference type="Proteomes" id="UP000007097">
    <property type="component" value="Chromosome"/>
</dbReference>
<dbReference type="HAMAP" id="MF_00789">
    <property type="entry name" value="UPF0319"/>
    <property type="match status" value="1"/>
</dbReference>
<dbReference type="InterPro" id="IPR018635">
    <property type="entry name" value="UPF0319"/>
</dbReference>
<dbReference type="NCBIfam" id="NF047712">
    <property type="entry name" value="CrliSynInhib"/>
    <property type="match status" value="1"/>
</dbReference>
<dbReference type="NCBIfam" id="NF002967">
    <property type="entry name" value="PRK03641.1"/>
    <property type="match status" value="1"/>
</dbReference>
<dbReference type="PANTHER" id="PTHR38108">
    <property type="entry name" value="UPF0319 PROTEIN YCCT"/>
    <property type="match status" value="1"/>
</dbReference>
<dbReference type="PANTHER" id="PTHR38108:SF1">
    <property type="entry name" value="UPF0319 PROTEIN YCCT"/>
    <property type="match status" value="1"/>
</dbReference>
<dbReference type="Pfam" id="PF09829">
    <property type="entry name" value="DUF2057"/>
    <property type="match status" value="1"/>
</dbReference>
<comment type="similarity">
    <text evidence="1">Belongs to the UPF0319 family.</text>
</comment>
<proteinExistence type="inferred from homology"/>
<keyword id="KW-0732">Signal</keyword>